<accession>B4T1S0</accession>
<keyword id="KW-0997">Cell inner membrane</keyword>
<keyword id="KW-1003">Cell membrane</keyword>
<keyword id="KW-0472">Membrane</keyword>
<keyword id="KW-0812">Transmembrane</keyword>
<keyword id="KW-1133">Transmembrane helix</keyword>
<evidence type="ECO:0000255" key="1">
    <source>
        <dbReference type="HAMAP-Rule" id="MF_01048"/>
    </source>
</evidence>
<feature type="chain" id="PRO_1000136222" description="Protein PsiE">
    <location>
        <begin position="1"/>
        <end position="136"/>
    </location>
</feature>
<feature type="transmembrane region" description="Helical" evidence="1">
    <location>
        <begin position="15"/>
        <end position="35"/>
    </location>
</feature>
<feature type="transmembrane region" description="Helical" evidence="1">
    <location>
        <begin position="55"/>
        <end position="75"/>
    </location>
</feature>
<feature type="transmembrane region" description="Helical" evidence="1">
    <location>
        <begin position="83"/>
        <end position="103"/>
    </location>
</feature>
<feature type="transmembrane region" description="Helical" evidence="1">
    <location>
        <begin position="108"/>
        <end position="128"/>
    </location>
</feature>
<name>PSIE_SALNS</name>
<dbReference type="EMBL" id="CP001113">
    <property type="protein sequence ID" value="ACF64833.1"/>
    <property type="molecule type" value="Genomic_DNA"/>
</dbReference>
<dbReference type="RefSeq" id="WP_000982749.1">
    <property type="nucleotide sequence ID" value="NZ_CCMR01000003.1"/>
</dbReference>
<dbReference type="SMR" id="B4T1S0"/>
<dbReference type="KEGG" id="see:SNSL254_A4568"/>
<dbReference type="HOGENOM" id="CLU_127561_0_1_6"/>
<dbReference type="Proteomes" id="UP000008824">
    <property type="component" value="Chromosome"/>
</dbReference>
<dbReference type="GO" id="GO:0005886">
    <property type="term" value="C:plasma membrane"/>
    <property type="evidence" value="ECO:0007669"/>
    <property type="project" value="UniProtKB-SubCell"/>
</dbReference>
<dbReference type="GO" id="GO:0016036">
    <property type="term" value="P:cellular response to phosphate starvation"/>
    <property type="evidence" value="ECO:0007669"/>
    <property type="project" value="InterPro"/>
</dbReference>
<dbReference type="HAMAP" id="MF_01048">
    <property type="entry name" value="PsiE"/>
    <property type="match status" value="1"/>
</dbReference>
<dbReference type="InterPro" id="IPR009315">
    <property type="entry name" value="P_starv_induced_PsiE"/>
</dbReference>
<dbReference type="InterPro" id="IPR020948">
    <property type="entry name" value="P_starv_induced_PsiE-like"/>
</dbReference>
<dbReference type="NCBIfam" id="NF002764">
    <property type="entry name" value="PRK02833.1-2"/>
    <property type="match status" value="1"/>
</dbReference>
<dbReference type="NCBIfam" id="NF002765">
    <property type="entry name" value="PRK02833.1-3"/>
    <property type="match status" value="1"/>
</dbReference>
<dbReference type="NCBIfam" id="NF002767">
    <property type="entry name" value="PRK02833.1-5"/>
    <property type="match status" value="1"/>
</dbReference>
<dbReference type="PANTHER" id="PTHR37819">
    <property type="entry name" value="PROTEIN PSIE"/>
    <property type="match status" value="1"/>
</dbReference>
<dbReference type="PANTHER" id="PTHR37819:SF1">
    <property type="entry name" value="PROTEIN PSIE"/>
    <property type="match status" value="1"/>
</dbReference>
<dbReference type="Pfam" id="PF06146">
    <property type="entry name" value="PsiE"/>
    <property type="match status" value="1"/>
</dbReference>
<dbReference type="PIRSF" id="PIRSF029598">
    <property type="entry name" value="PsiE"/>
    <property type="match status" value="1"/>
</dbReference>
<organism>
    <name type="scientific">Salmonella newport (strain SL254)</name>
    <dbReference type="NCBI Taxonomy" id="423368"/>
    <lineage>
        <taxon>Bacteria</taxon>
        <taxon>Pseudomonadati</taxon>
        <taxon>Pseudomonadota</taxon>
        <taxon>Gammaproteobacteria</taxon>
        <taxon>Enterobacterales</taxon>
        <taxon>Enterobacteriaceae</taxon>
        <taxon>Salmonella</taxon>
    </lineage>
</organism>
<sequence length="136" mass="15604">MMPLSRSRLEFIATILQNVLNLGLLTLGLILVVFLGKETVHLADALFAPEQASKYELVEGLVIYFLYFEFIALIVKYFKSGLHFPLRYFVYIGITAIVRLIIVDHKTPMDVLLYSAAILLLVITLWLCNSNRLRRE</sequence>
<protein>
    <recommendedName>
        <fullName evidence="1">Protein PsiE</fullName>
    </recommendedName>
</protein>
<proteinExistence type="inferred from homology"/>
<comment type="subcellular location">
    <subcellularLocation>
        <location evidence="1">Cell inner membrane</location>
        <topology evidence="1">Multi-pass membrane protein</topology>
    </subcellularLocation>
</comment>
<comment type="similarity">
    <text evidence="1">Belongs to the PsiE family.</text>
</comment>
<reference key="1">
    <citation type="journal article" date="2011" name="J. Bacteriol.">
        <title>Comparative genomics of 28 Salmonella enterica isolates: evidence for CRISPR-mediated adaptive sublineage evolution.</title>
        <authorList>
            <person name="Fricke W.F."/>
            <person name="Mammel M.K."/>
            <person name="McDermott P.F."/>
            <person name="Tartera C."/>
            <person name="White D.G."/>
            <person name="Leclerc J.E."/>
            <person name="Ravel J."/>
            <person name="Cebula T.A."/>
        </authorList>
    </citation>
    <scope>NUCLEOTIDE SEQUENCE [LARGE SCALE GENOMIC DNA]</scope>
    <source>
        <strain>SL254</strain>
    </source>
</reference>
<gene>
    <name evidence="1" type="primary">psiE</name>
    <name type="ordered locus">SNSL254_A4568</name>
</gene>